<feature type="transit peptide" description="Mitochondrion" evidence="4">
    <location>
        <begin position="1"/>
        <end status="unknown"/>
    </location>
</feature>
<feature type="chain" id="PRO_0000332307" description="Octanoyl-[acyl-carrier-protein]:protein N-octanoyltransferase LIPT2, mitochondrial">
    <location>
        <begin status="unknown"/>
        <end position="224"/>
    </location>
</feature>
<feature type="domain" description="BPL/LPL catalytic" evidence="5">
    <location>
        <begin position="37"/>
        <end position="217"/>
    </location>
</feature>
<feature type="active site" description="Acyl-thioester intermediate" evidence="1">
    <location>
        <position position="178"/>
    </location>
</feature>
<feature type="binding site" evidence="1">
    <location>
        <begin position="81"/>
        <end position="88"/>
    </location>
    <ligand>
        <name>substrate</name>
    </ligand>
</feature>
<feature type="binding site" evidence="1">
    <location>
        <begin position="147"/>
        <end position="149"/>
    </location>
    <ligand>
        <name>substrate</name>
    </ligand>
</feature>
<feature type="binding site" evidence="1">
    <location>
        <begin position="160"/>
        <end position="162"/>
    </location>
    <ligand>
        <name>substrate</name>
    </ligand>
</feature>
<feature type="site" description="Lowers pKa of active site Cys" evidence="1">
    <location>
        <position position="144"/>
    </location>
</feature>
<sequence>MSVTKAAVKAVHLGRISYHSALKIQQQHIQQHLDSSSNIPNTLLLCEHEPVYTIGLRQAPYPPAEEQRLKALGADFCRTNRGGLITFHGPGQLVCYPILNLGCFKKSVRWYVCELERTVIKMCGKFGIKASTSPDTGVWVGDNKICAIGIHCGRYITSHGLALNCNTDMSWFDNIVPCGIVGKGVTSLSQELERDVPPDEAIPKLLEAFTEQFNCTLTYNGSLS</sequence>
<reference key="1">
    <citation type="submission" date="2006-03" db="EMBL/GenBank/DDBJ databases">
        <authorList>
            <consortium name="NIH - Zebrafish Gene Collection (ZGC) project"/>
        </authorList>
    </citation>
    <scope>NUCLEOTIDE SEQUENCE [LARGE SCALE MRNA]</scope>
</reference>
<keyword id="KW-0012">Acyltransferase</keyword>
<keyword id="KW-0436">Ligase</keyword>
<keyword id="KW-0496">Mitochondrion</keyword>
<keyword id="KW-1185">Reference proteome</keyword>
<keyword id="KW-0808">Transferase</keyword>
<keyword id="KW-0809">Transit peptide</keyword>
<gene>
    <name type="primary">lipt2</name>
    <name type="ORF">zgc:136925</name>
</gene>
<protein>
    <recommendedName>
        <fullName>Octanoyl-[acyl-carrier-protein]:protein N-octanoyltransferase LIPT2, mitochondrial</fullName>
    </recommendedName>
    <alternativeName>
        <fullName>Lipoate-protein ligase B</fullName>
    </alternativeName>
    <alternativeName>
        <fullName>Lipoyl/octanoyl transferase</fullName>
    </alternativeName>
    <alternativeName>
        <fullName>Lipoyltransferase 2</fullName>
        <ecNumber evidence="3">2.3.1.181</ecNumber>
    </alternativeName>
    <alternativeName>
        <fullName>Octanoyl-[acyl-carrier-protein]-protein N-octanoyltransferase</fullName>
    </alternativeName>
</protein>
<name>LIPT2_DANRE</name>
<evidence type="ECO:0000250" key="1"/>
<evidence type="ECO:0000250" key="2">
    <source>
        <dbReference type="UniProtKB" id="A6NK58"/>
    </source>
</evidence>
<evidence type="ECO:0000250" key="3">
    <source>
        <dbReference type="UniProtKB" id="Q9D009"/>
    </source>
</evidence>
<evidence type="ECO:0000255" key="4"/>
<evidence type="ECO:0000255" key="5">
    <source>
        <dbReference type="PROSITE-ProRule" id="PRU01067"/>
    </source>
</evidence>
<evidence type="ECO:0000305" key="6"/>
<dbReference type="EC" id="2.3.1.181" evidence="3"/>
<dbReference type="EMBL" id="BC114309">
    <property type="protein sequence ID" value="AAI14310.1"/>
    <property type="molecule type" value="mRNA"/>
</dbReference>
<dbReference type="RefSeq" id="NP_001035082.1">
    <property type="nucleotide sequence ID" value="NM_001039993.1"/>
</dbReference>
<dbReference type="SMR" id="Q29R99"/>
<dbReference type="FunCoup" id="Q29R99">
    <property type="interactions" value="895"/>
</dbReference>
<dbReference type="STRING" id="7955.ENSDARP00000092768"/>
<dbReference type="PaxDb" id="7955-ENSDARP00000092768"/>
<dbReference type="GeneID" id="664765"/>
<dbReference type="KEGG" id="dre:664765"/>
<dbReference type="AGR" id="ZFIN:ZDB-GENE-060312-18"/>
<dbReference type="CTD" id="387787"/>
<dbReference type="ZFIN" id="ZDB-GENE-060312-18">
    <property type="gene designation" value="lipt2"/>
</dbReference>
<dbReference type="eggNOG" id="KOG0325">
    <property type="taxonomic scope" value="Eukaryota"/>
</dbReference>
<dbReference type="InParanoid" id="Q29R99"/>
<dbReference type="OrthoDB" id="19908at2759"/>
<dbReference type="PhylomeDB" id="Q29R99"/>
<dbReference type="Reactome" id="R-DRE-9857492">
    <property type="pathway name" value="Protein lipoylation"/>
</dbReference>
<dbReference type="UniPathway" id="UPA00538">
    <property type="reaction ID" value="UER00592"/>
</dbReference>
<dbReference type="PRO" id="PR:Q29R99"/>
<dbReference type="Proteomes" id="UP000000437">
    <property type="component" value="Chromosome 15"/>
</dbReference>
<dbReference type="GO" id="GO:0005739">
    <property type="term" value="C:mitochondrion"/>
    <property type="evidence" value="ECO:0000250"/>
    <property type="project" value="UniProtKB"/>
</dbReference>
<dbReference type="GO" id="GO:0016874">
    <property type="term" value="F:ligase activity"/>
    <property type="evidence" value="ECO:0007669"/>
    <property type="project" value="UniProtKB-KW"/>
</dbReference>
<dbReference type="GO" id="GO:0033819">
    <property type="term" value="F:lipoyl(octanoyl) transferase activity"/>
    <property type="evidence" value="ECO:0000250"/>
    <property type="project" value="UniProtKB"/>
</dbReference>
<dbReference type="GO" id="GO:2000376">
    <property type="term" value="P:positive regulation of oxygen metabolic process"/>
    <property type="evidence" value="ECO:0000250"/>
    <property type="project" value="UniProtKB"/>
</dbReference>
<dbReference type="GO" id="GO:0009249">
    <property type="term" value="P:protein lipoylation"/>
    <property type="evidence" value="ECO:0000250"/>
    <property type="project" value="UniProtKB"/>
</dbReference>
<dbReference type="CDD" id="cd16444">
    <property type="entry name" value="LipB"/>
    <property type="match status" value="1"/>
</dbReference>
<dbReference type="FunFam" id="3.30.930.10:FF:000035">
    <property type="entry name" value="Putative lipoyltransferase 2, mitochondrial"/>
    <property type="match status" value="1"/>
</dbReference>
<dbReference type="Gene3D" id="3.30.930.10">
    <property type="entry name" value="Bira Bifunctional Protein, Domain 2"/>
    <property type="match status" value="1"/>
</dbReference>
<dbReference type="HAMAP" id="MF_00013">
    <property type="entry name" value="LipB"/>
    <property type="match status" value="1"/>
</dbReference>
<dbReference type="InterPro" id="IPR045864">
    <property type="entry name" value="aa-tRNA-synth_II/BPL/LPL"/>
</dbReference>
<dbReference type="InterPro" id="IPR004143">
    <property type="entry name" value="BPL_LPL_catalytic"/>
</dbReference>
<dbReference type="InterPro" id="IPR000544">
    <property type="entry name" value="Octanoyltransferase"/>
</dbReference>
<dbReference type="InterPro" id="IPR020605">
    <property type="entry name" value="Octanoyltransferase_CS"/>
</dbReference>
<dbReference type="NCBIfam" id="TIGR00214">
    <property type="entry name" value="lipB"/>
    <property type="match status" value="1"/>
</dbReference>
<dbReference type="NCBIfam" id="NF010925">
    <property type="entry name" value="PRK14345.1"/>
    <property type="match status" value="1"/>
</dbReference>
<dbReference type="PANTHER" id="PTHR10993:SF7">
    <property type="entry name" value="LIPOYLTRANSFERASE 2, MITOCHONDRIAL-RELATED"/>
    <property type="match status" value="1"/>
</dbReference>
<dbReference type="PANTHER" id="PTHR10993">
    <property type="entry name" value="OCTANOYLTRANSFERASE"/>
    <property type="match status" value="1"/>
</dbReference>
<dbReference type="Pfam" id="PF21948">
    <property type="entry name" value="LplA-B_cat"/>
    <property type="match status" value="1"/>
</dbReference>
<dbReference type="PIRSF" id="PIRSF016262">
    <property type="entry name" value="LPLase"/>
    <property type="match status" value="1"/>
</dbReference>
<dbReference type="SUPFAM" id="SSF55681">
    <property type="entry name" value="Class II aaRS and biotin synthetases"/>
    <property type="match status" value="1"/>
</dbReference>
<dbReference type="PROSITE" id="PS51733">
    <property type="entry name" value="BPL_LPL_CATALYTIC"/>
    <property type="match status" value="1"/>
</dbReference>
<dbReference type="PROSITE" id="PS01313">
    <property type="entry name" value="LIPB"/>
    <property type="match status" value="1"/>
</dbReference>
<accession>Q29R99</accession>
<proteinExistence type="evidence at transcript level"/>
<comment type="function">
    <text evidence="2 3">Catalyzes the transfer of endogenously produced octanoic acid from octanoyl-acyl-carrier-protein (octanoyl-ACP) onto the lipoyl domains of lipoate-dependent enzymes such as the protein H of the glycine cleavage system (GCSH) (By similarity). Lipoyl-ACP can also act as a substrate although octanoyl-ACP is likely to be the physiological substrate (By similarity).</text>
</comment>
<comment type="catalytic activity">
    <reaction evidence="3">
        <text>octanoyl-[ACP] + L-lysyl-[protein] = N(6)-octanoyl-L-lysyl-[protein] + holo-[ACP] + H(+)</text>
        <dbReference type="Rhea" id="RHEA:17665"/>
        <dbReference type="Rhea" id="RHEA-COMP:9636"/>
        <dbReference type="Rhea" id="RHEA-COMP:9685"/>
        <dbReference type="Rhea" id="RHEA-COMP:9752"/>
        <dbReference type="Rhea" id="RHEA-COMP:9928"/>
        <dbReference type="ChEBI" id="CHEBI:15378"/>
        <dbReference type="ChEBI" id="CHEBI:29969"/>
        <dbReference type="ChEBI" id="CHEBI:64479"/>
        <dbReference type="ChEBI" id="CHEBI:78463"/>
        <dbReference type="ChEBI" id="CHEBI:78809"/>
        <dbReference type="EC" id="2.3.1.181"/>
    </reaction>
    <physiologicalReaction direction="left-to-right" evidence="3">
        <dbReference type="Rhea" id="RHEA:17666"/>
    </physiologicalReaction>
</comment>
<comment type="pathway">
    <text>Protein modification; protein lipoylation via endogenous pathway; protein N(6)-(lipoyl)lysine from octanoyl-[acyl-carrier-protein]: step 1/2.</text>
</comment>
<comment type="subcellular location">
    <subcellularLocation>
        <location evidence="2">Mitochondrion</location>
    </subcellularLocation>
</comment>
<comment type="miscellaneous">
    <text evidence="1">In the reaction, the free carboxyl group of octanoic acid is attached via an amide linkage to the epsilon-amino group of a specific lysine residue of lipoyl domains of lipoate-dependent enzymes.</text>
</comment>
<comment type="similarity">
    <text evidence="6">Belongs to the LipB family.</text>
</comment>
<organism>
    <name type="scientific">Danio rerio</name>
    <name type="common">Zebrafish</name>
    <name type="synonym">Brachydanio rerio</name>
    <dbReference type="NCBI Taxonomy" id="7955"/>
    <lineage>
        <taxon>Eukaryota</taxon>
        <taxon>Metazoa</taxon>
        <taxon>Chordata</taxon>
        <taxon>Craniata</taxon>
        <taxon>Vertebrata</taxon>
        <taxon>Euteleostomi</taxon>
        <taxon>Actinopterygii</taxon>
        <taxon>Neopterygii</taxon>
        <taxon>Teleostei</taxon>
        <taxon>Ostariophysi</taxon>
        <taxon>Cypriniformes</taxon>
        <taxon>Danionidae</taxon>
        <taxon>Danioninae</taxon>
        <taxon>Danio</taxon>
    </lineage>
</organism>